<gene>
    <name evidence="1" type="primary">hisD</name>
    <name type="ordered locus">TTE2138</name>
</gene>
<dbReference type="EC" id="1.1.1.23" evidence="1"/>
<dbReference type="EMBL" id="AE008691">
    <property type="protein sequence ID" value="AAM25303.1"/>
    <property type="molecule type" value="Genomic_DNA"/>
</dbReference>
<dbReference type="RefSeq" id="WP_009610407.1">
    <property type="nucleotide sequence ID" value="NC_003869.1"/>
</dbReference>
<dbReference type="SMR" id="Q8R882"/>
<dbReference type="STRING" id="273068.TTE2138"/>
<dbReference type="KEGG" id="tte:TTE2138"/>
<dbReference type="eggNOG" id="COG0141">
    <property type="taxonomic scope" value="Bacteria"/>
</dbReference>
<dbReference type="HOGENOM" id="CLU_006732_3_3_9"/>
<dbReference type="OrthoDB" id="9805269at2"/>
<dbReference type="UniPathway" id="UPA00031">
    <property type="reaction ID" value="UER00014"/>
</dbReference>
<dbReference type="Proteomes" id="UP000000555">
    <property type="component" value="Chromosome"/>
</dbReference>
<dbReference type="GO" id="GO:0005829">
    <property type="term" value="C:cytosol"/>
    <property type="evidence" value="ECO:0007669"/>
    <property type="project" value="TreeGrafter"/>
</dbReference>
<dbReference type="GO" id="GO:0004399">
    <property type="term" value="F:histidinol dehydrogenase activity"/>
    <property type="evidence" value="ECO:0007669"/>
    <property type="project" value="UniProtKB-UniRule"/>
</dbReference>
<dbReference type="GO" id="GO:0051287">
    <property type="term" value="F:NAD binding"/>
    <property type="evidence" value="ECO:0007669"/>
    <property type="project" value="InterPro"/>
</dbReference>
<dbReference type="GO" id="GO:0008270">
    <property type="term" value="F:zinc ion binding"/>
    <property type="evidence" value="ECO:0007669"/>
    <property type="project" value="UniProtKB-UniRule"/>
</dbReference>
<dbReference type="GO" id="GO:0000105">
    <property type="term" value="P:L-histidine biosynthetic process"/>
    <property type="evidence" value="ECO:0007669"/>
    <property type="project" value="UniProtKB-UniRule"/>
</dbReference>
<dbReference type="CDD" id="cd06572">
    <property type="entry name" value="Histidinol_dh"/>
    <property type="match status" value="1"/>
</dbReference>
<dbReference type="FunFam" id="3.40.50.1980:FF:000001">
    <property type="entry name" value="Histidinol dehydrogenase"/>
    <property type="match status" value="1"/>
</dbReference>
<dbReference type="FunFam" id="3.40.50.1980:FF:000026">
    <property type="entry name" value="Histidinol dehydrogenase"/>
    <property type="match status" value="1"/>
</dbReference>
<dbReference type="Gene3D" id="1.20.5.1300">
    <property type="match status" value="1"/>
</dbReference>
<dbReference type="Gene3D" id="3.40.50.1980">
    <property type="entry name" value="Nitrogenase molybdenum iron protein domain"/>
    <property type="match status" value="2"/>
</dbReference>
<dbReference type="HAMAP" id="MF_01024">
    <property type="entry name" value="HisD"/>
    <property type="match status" value="1"/>
</dbReference>
<dbReference type="InterPro" id="IPR016161">
    <property type="entry name" value="Ald_DH/histidinol_DH"/>
</dbReference>
<dbReference type="InterPro" id="IPR001692">
    <property type="entry name" value="Histidinol_DH_CS"/>
</dbReference>
<dbReference type="InterPro" id="IPR022695">
    <property type="entry name" value="Histidinol_DH_monofunct"/>
</dbReference>
<dbReference type="InterPro" id="IPR012131">
    <property type="entry name" value="Hstdl_DH"/>
</dbReference>
<dbReference type="NCBIfam" id="TIGR00069">
    <property type="entry name" value="hisD"/>
    <property type="match status" value="1"/>
</dbReference>
<dbReference type="PANTHER" id="PTHR21256:SF2">
    <property type="entry name" value="HISTIDINE BIOSYNTHESIS TRIFUNCTIONAL PROTEIN"/>
    <property type="match status" value="1"/>
</dbReference>
<dbReference type="PANTHER" id="PTHR21256">
    <property type="entry name" value="HISTIDINOL DEHYDROGENASE HDH"/>
    <property type="match status" value="1"/>
</dbReference>
<dbReference type="Pfam" id="PF00815">
    <property type="entry name" value="Histidinol_dh"/>
    <property type="match status" value="1"/>
</dbReference>
<dbReference type="PIRSF" id="PIRSF000099">
    <property type="entry name" value="Histidinol_dh"/>
    <property type="match status" value="1"/>
</dbReference>
<dbReference type="PRINTS" id="PR00083">
    <property type="entry name" value="HOLDHDRGNASE"/>
</dbReference>
<dbReference type="SUPFAM" id="SSF53720">
    <property type="entry name" value="ALDH-like"/>
    <property type="match status" value="1"/>
</dbReference>
<dbReference type="PROSITE" id="PS00611">
    <property type="entry name" value="HISOL_DEHYDROGENASE"/>
    <property type="match status" value="1"/>
</dbReference>
<comment type="function">
    <text evidence="1">Catalyzes the sequential NAD-dependent oxidations of L-histidinol to L-histidinaldehyde and then to L-histidine.</text>
</comment>
<comment type="catalytic activity">
    <reaction evidence="1">
        <text>L-histidinol + 2 NAD(+) + H2O = L-histidine + 2 NADH + 3 H(+)</text>
        <dbReference type="Rhea" id="RHEA:20641"/>
        <dbReference type="ChEBI" id="CHEBI:15377"/>
        <dbReference type="ChEBI" id="CHEBI:15378"/>
        <dbReference type="ChEBI" id="CHEBI:57540"/>
        <dbReference type="ChEBI" id="CHEBI:57595"/>
        <dbReference type="ChEBI" id="CHEBI:57699"/>
        <dbReference type="ChEBI" id="CHEBI:57945"/>
        <dbReference type="EC" id="1.1.1.23"/>
    </reaction>
</comment>
<comment type="cofactor">
    <cofactor evidence="1">
        <name>Zn(2+)</name>
        <dbReference type="ChEBI" id="CHEBI:29105"/>
    </cofactor>
    <text evidence="1">Binds 1 zinc ion per subunit.</text>
</comment>
<comment type="pathway">
    <text evidence="1">Amino-acid biosynthesis; L-histidine biosynthesis; L-histidine from 5-phospho-alpha-D-ribose 1-diphosphate: step 9/9.</text>
</comment>
<comment type="similarity">
    <text evidence="1">Belongs to the histidinol dehydrogenase family.</text>
</comment>
<feature type="chain" id="PRO_0000135867" description="Histidinol dehydrogenase">
    <location>
        <begin position="1"/>
        <end position="430"/>
    </location>
</feature>
<feature type="active site" description="Proton acceptor" evidence="1">
    <location>
        <position position="326"/>
    </location>
</feature>
<feature type="active site" description="Proton acceptor" evidence="1">
    <location>
        <position position="327"/>
    </location>
</feature>
<feature type="binding site" evidence="1">
    <location>
        <position position="129"/>
    </location>
    <ligand>
        <name>NAD(+)</name>
        <dbReference type="ChEBI" id="CHEBI:57540"/>
    </ligand>
</feature>
<feature type="binding site" evidence="1">
    <location>
        <position position="190"/>
    </location>
    <ligand>
        <name>NAD(+)</name>
        <dbReference type="ChEBI" id="CHEBI:57540"/>
    </ligand>
</feature>
<feature type="binding site" evidence="1">
    <location>
        <position position="213"/>
    </location>
    <ligand>
        <name>NAD(+)</name>
        <dbReference type="ChEBI" id="CHEBI:57540"/>
    </ligand>
</feature>
<feature type="binding site" evidence="1">
    <location>
        <position position="236"/>
    </location>
    <ligand>
        <name>substrate</name>
    </ligand>
</feature>
<feature type="binding site" evidence="1">
    <location>
        <position position="258"/>
    </location>
    <ligand>
        <name>substrate</name>
    </ligand>
</feature>
<feature type="binding site" evidence="1">
    <location>
        <position position="258"/>
    </location>
    <ligand>
        <name>Zn(2+)</name>
        <dbReference type="ChEBI" id="CHEBI:29105"/>
    </ligand>
</feature>
<feature type="binding site" evidence="1">
    <location>
        <position position="261"/>
    </location>
    <ligand>
        <name>substrate</name>
    </ligand>
</feature>
<feature type="binding site" evidence="1">
    <location>
        <position position="261"/>
    </location>
    <ligand>
        <name>Zn(2+)</name>
        <dbReference type="ChEBI" id="CHEBI:29105"/>
    </ligand>
</feature>
<feature type="binding site" evidence="1">
    <location>
        <position position="327"/>
    </location>
    <ligand>
        <name>substrate</name>
    </ligand>
</feature>
<feature type="binding site" evidence="1">
    <location>
        <position position="360"/>
    </location>
    <ligand>
        <name>substrate</name>
    </ligand>
</feature>
<feature type="binding site" evidence="1">
    <location>
        <position position="360"/>
    </location>
    <ligand>
        <name>Zn(2+)</name>
        <dbReference type="ChEBI" id="CHEBI:29105"/>
    </ligand>
</feature>
<feature type="binding site" evidence="1">
    <location>
        <position position="414"/>
    </location>
    <ligand>
        <name>substrate</name>
    </ligand>
</feature>
<feature type="binding site" evidence="1">
    <location>
        <position position="419"/>
    </location>
    <ligand>
        <name>substrate</name>
    </ligand>
</feature>
<feature type="binding site" evidence="1">
    <location>
        <position position="419"/>
    </location>
    <ligand>
        <name>Zn(2+)</name>
        <dbReference type="ChEBI" id="CHEBI:29105"/>
    </ligand>
</feature>
<organism>
    <name type="scientific">Caldanaerobacter subterraneus subsp. tengcongensis (strain DSM 15242 / JCM 11007 / NBRC 100824 / MB4)</name>
    <name type="common">Thermoanaerobacter tengcongensis</name>
    <dbReference type="NCBI Taxonomy" id="273068"/>
    <lineage>
        <taxon>Bacteria</taxon>
        <taxon>Bacillati</taxon>
        <taxon>Bacillota</taxon>
        <taxon>Clostridia</taxon>
        <taxon>Thermoanaerobacterales</taxon>
        <taxon>Thermoanaerobacteraceae</taxon>
        <taxon>Caldanaerobacter</taxon>
    </lineage>
</organism>
<proteinExistence type="inferred from homology"/>
<protein>
    <recommendedName>
        <fullName evidence="1">Histidinol dehydrogenase</fullName>
        <shortName evidence="1">HDH</shortName>
        <ecNumber evidence="1">1.1.1.23</ecNumber>
    </recommendedName>
</protein>
<reference key="1">
    <citation type="journal article" date="2002" name="Genome Res.">
        <title>A complete sequence of the T. tengcongensis genome.</title>
        <authorList>
            <person name="Bao Q."/>
            <person name="Tian Y."/>
            <person name="Li W."/>
            <person name="Xu Z."/>
            <person name="Xuan Z."/>
            <person name="Hu S."/>
            <person name="Dong W."/>
            <person name="Yang J."/>
            <person name="Chen Y."/>
            <person name="Xue Y."/>
            <person name="Xu Y."/>
            <person name="Lai X."/>
            <person name="Huang L."/>
            <person name="Dong X."/>
            <person name="Ma Y."/>
            <person name="Ling L."/>
            <person name="Tan H."/>
            <person name="Chen R."/>
            <person name="Wang J."/>
            <person name="Yu J."/>
            <person name="Yang H."/>
        </authorList>
    </citation>
    <scope>NUCLEOTIDE SEQUENCE [LARGE SCALE GENOMIC DNA]</scope>
    <source>
        <strain>DSM 15242 / JCM 11007 / NBRC 100824 / MB4</strain>
    </source>
</reference>
<name>HISX_CALS4</name>
<sequence length="430" mass="47674">MIEMFDFTKEVDIGIFNKIQNRSKLENKEIAKRVEDIIENVRERKDKALFEYTYMYDGINLNSETVKVKEEEIKRAYEEVKEDFLKALDKAIKNITEFHEKQKEKTWMDFKEGIVYGQVLRPLSSVGIYVPGGTASYPSSVLMNGIPAKVAGVERIVMVSPAGKKGISPYVLVAADKIGIKEIYKIGGAQAVAALAFGTESIPKVDKIVGPGNIYVAMAKRALYGYVDIDMVAGPSEILVIADESASPKYVAADLLSQAEHDVMASSILVTTSKELAEKVKKEIERQMEYLERKEIIAESLKNFGAIIVIDNLKEAIGIANEIAPEHLELVIENPFEILGEIKNAGAVFLGEFSPEPLGDYLAGPNHVLPTSGTARFFSPLSVRDFVKKMNVLYYSKEALSSVKDDVITLAEAEELTAHANSVKVRFYND</sequence>
<evidence type="ECO:0000255" key="1">
    <source>
        <dbReference type="HAMAP-Rule" id="MF_01024"/>
    </source>
</evidence>
<keyword id="KW-0028">Amino-acid biosynthesis</keyword>
<keyword id="KW-0368">Histidine biosynthesis</keyword>
<keyword id="KW-0479">Metal-binding</keyword>
<keyword id="KW-0520">NAD</keyword>
<keyword id="KW-0560">Oxidoreductase</keyword>
<keyword id="KW-1185">Reference proteome</keyword>
<keyword id="KW-0862">Zinc</keyword>
<accession>Q8R882</accession>